<comment type="function">
    <text evidence="1">Endonuclease that specifically degrades the RNA of RNA-DNA hybrids.</text>
</comment>
<comment type="catalytic activity">
    <reaction evidence="1">
        <text>Endonucleolytic cleavage to 5'-phosphomonoester.</text>
        <dbReference type="EC" id="3.1.26.4"/>
    </reaction>
</comment>
<comment type="cofactor">
    <cofactor evidence="1">
        <name>Mn(2+)</name>
        <dbReference type="ChEBI" id="CHEBI:29035"/>
    </cofactor>
    <cofactor evidence="1">
        <name>Mg(2+)</name>
        <dbReference type="ChEBI" id="CHEBI:18420"/>
    </cofactor>
    <text evidence="1">Manganese or magnesium. Binds 1 divalent metal ion per monomer in the absence of substrate. May bind a second metal ion after substrate binding.</text>
</comment>
<comment type="subcellular location">
    <subcellularLocation>
        <location evidence="1">Cytoplasm</location>
    </subcellularLocation>
</comment>
<comment type="similarity">
    <text evidence="1">Belongs to the RNase HII family. RnhC subfamily.</text>
</comment>
<organism>
    <name type="scientific">Chlamydia trachomatis serovar L2 (strain ATCC VR-902B / DSM 19102 / 434/Bu)</name>
    <dbReference type="NCBI Taxonomy" id="471472"/>
    <lineage>
        <taxon>Bacteria</taxon>
        <taxon>Pseudomonadati</taxon>
        <taxon>Chlamydiota</taxon>
        <taxon>Chlamydiia</taxon>
        <taxon>Chlamydiales</taxon>
        <taxon>Chlamydiaceae</taxon>
        <taxon>Chlamydia/Chlamydophila group</taxon>
        <taxon>Chlamydia</taxon>
    </lineage>
</organism>
<protein>
    <recommendedName>
        <fullName evidence="1">Ribonuclease HIII</fullName>
        <shortName evidence="1">RNase HIII</shortName>
        <ecNumber evidence="1">3.1.26.4</ecNumber>
    </recommendedName>
</protein>
<accession>B0B9B5</accession>
<gene>
    <name evidence="1" type="primary">rnhC</name>
    <name type="ordered locus">CTL0263</name>
</gene>
<dbReference type="EC" id="3.1.26.4" evidence="1"/>
<dbReference type="EMBL" id="AM884176">
    <property type="protein sequence ID" value="CAP03702.1"/>
    <property type="molecule type" value="Genomic_DNA"/>
</dbReference>
<dbReference type="RefSeq" id="WP_009872309.1">
    <property type="nucleotide sequence ID" value="NC_010287.1"/>
</dbReference>
<dbReference type="RefSeq" id="YP_001654347.1">
    <property type="nucleotide sequence ID" value="NC_010287.1"/>
</dbReference>
<dbReference type="SMR" id="B0B9B5"/>
<dbReference type="KEGG" id="ctb:CTL0263"/>
<dbReference type="PATRIC" id="fig|471472.4.peg.285"/>
<dbReference type="HOGENOM" id="CLU_059546_0_0_0"/>
<dbReference type="Proteomes" id="UP001154402">
    <property type="component" value="Chromosome"/>
</dbReference>
<dbReference type="GO" id="GO:0005737">
    <property type="term" value="C:cytoplasm"/>
    <property type="evidence" value="ECO:0007669"/>
    <property type="project" value="UniProtKB-SubCell"/>
</dbReference>
<dbReference type="GO" id="GO:0032299">
    <property type="term" value="C:ribonuclease H2 complex"/>
    <property type="evidence" value="ECO:0007669"/>
    <property type="project" value="TreeGrafter"/>
</dbReference>
<dbReference type="GO" id="GO:0000287">
    <property type="term" value="F:magnesium ion binding"/>
    <property type="evidence" value="ECO:0007669"/>
    <property type="project" value="UniProtKB-UniRule"/>
</dbReference>
<dbReference type="GO" id="GO:0003723">
    <property type="term" value="F:RNA binding"/>
    <property type="evidence" value="ECO:0007669"/>
    <property type="project" value="InterPro"/>
</dbReference>
<dbReference type="GO" id="GO:0004523">
    <property type="term" value="F:RNA-DNA hybrid ribonuclease activity"/>
    <property type="evidence" value="ECO:0007669"/>
    <property type="project" value="UniProtKB-UniRule"/>
</dbReference>
<dbReference type="GO" id="GO:0043137">
    <property type="term" value="P:DNA replication, removal of RNA primer"/>
    <property type="evidence" value="ECO:0007669"/>
    <property type="project" value="TreeGrafter"/>
</dbReference>
<dbReference type="GO" id="GO:0006298">
    <property type="term" value="P:mismatch repair"/>
    <property type="evidence" value="ECO:0007669"/>
    <property type="project" value="TreeGrafter"/>
</dbReference>
<dbReference type="CDD" id="cd06590">
    <property type="entry name" value="RNase_HII_bacteria_HIII_like"/>
    <property type="match status" value="1"/>
</dbReference>
<dbReference type="CDD" id="cd14796">
    <property type="entry name" value="RNAse_HIII_N"/>
    <property type="match status" value="1"/>
</dbReference>
<dbReference type="FunFam" id="3.30.310.10:FF:000032">
    <property type="entry name" value="Ribonuclease HIII"/>
    <property type="match status" value="1"/>
</dbReference>
<dbReference type="Gene3D" id="3.30.420.10">
    <property type="entry name" value="Ribonuclease H-like superfamily/Ribonuclease H"/>
    <property type="match status" value="1"/>
</dbReference>
<dbReference type="Gene3D" id="3.30.310.10">
    <property type="entry name" value="TATA-Binding Protein"/>
    <property type="match status" value="1"/>
</dbReference>
<dbReference type="HAMAP" id="MF_00053">
    <property type="entry name" value="RNase_HIII"/>
    <property type="match status" value="1"/>
</dbReference>
<dbReference type="InterPro" id="IPR001352">
    <property type="entry name" value="RNase_HII/HIII"/>
</dbReference>
<dbReference type="InterPro" id="IPR024567">
    <property type="entry name" value="RNase_HII/HIII_dom"/>
</dbReference>
<dbReference type="InterPro" id="IPR004641">
    <property type="entry name" value="RNase_HIII"/>
</dbReference>
<dbReference type="InterPro" id="IPR024568">
    <property type="entry name" value="RNase_HIII_N"/>
</dbReference>
<dbReference type="InterPro" id="IPR012337">
    <property type="entry name" value="RNaseH-like_sf"/>
</dbReference>
<dbReference type="InterPro" id="IPR036397">
    <property type="entry name" value="RNaseH_sf"/>
</dbReference>
<dbReference type="InterPro" id="IPR012295">
    <property type="entry name" value="TBP_dom_sf"/>
</dbReference>
<dbReference type="NCBIfam" id="TIGR00716">
    <property type="entry name" value="rnhC"/>
    <property type="match status" value="1"/>
</dbReference>
<dbReference type="PANTHER" id="PTHR10954:SF23">
    <property type="entry name" value="RIBONUCLEASE"/>
    <property type="match status" value="1"/>
</dbReference>
<dbReference type="PANTHER" id="PTHR10954">
    <property type="entry name" value="RIBONUCLEASE H2 SUBUNIT A"/>
    <property type="match status" value="1"/>
</dbReference>
<dbReference type="Pfam" id="PF11858">
    <property type="entry name" value="DUF3378"/>
    <property type="match status" value="1"/>
</dbReference>
<dbReference type="Pfam" id="PF01351">
    <property type="entry name" value="RNase_HII"/>
    <property type="match status" value="1"/>
</dbReference>
<dbReference type="PIRSF" id="PIRSF037748">
    <property type="entry name" value="RnhC"/>
    <property type="match status" value="1"/>
</dbReference>
<dbReference type="SUPFAM" id="SSF53098">
    <property type="entry name" value="Ribonuclease H-like"/>
    <property type="match status" value="1"/>
</dbReference>
<dbReference type="PROSITE" id="PS51975">
    <property type="entry name" value="RNASE_H_2"/>
    <property type="match status" value="1"/>
</dbReference>
<name>RNH3_CHLT2</name>
<keyword id="KW-0963">Cytoplasm</keyword>
<keyword id="KW-0255">Endonuclease</keyword>
<keyword id="KW-0378">Hydrolase</keyword>
<keyword id="KW-0460">Magnesium</keyword>
<keyword id="KW-0479">Metal-binding</keyword>
<keyword id="KW-0540">Nuclease</keyword>
<evidence type="ECO:0000255" key="1">
    <source>
        <dbReference type="HAMAP-Rule" id="MF_00053"/>
    </source>
</evidence>
<evidence type="ECO:0000255" key="2">
    <source>
        <dbReference type="PROSITE-ProRule" id="PRU01319"/>
    </source>
</evidence>
<reference key="1">
    <citation type="journal article" date="2008" name="Genome Res.">
        <title>Chlamydia trachomatis: genome sequence analysis of lymphogranuloma venereum isolates.</title>
        <authorList>
            <person name="Thomson N.R."/>
            <person name="Holden M.T.G."/>
            <person name="Carder C."/>
            <person name="Lennard N."/>
            <person name="Lockey S.J."/>
            <person name="Marsh P."/>
            <person name="Skipp P."/>
            <person name="O'Connor C.D."/>
            <person name="Goodhead I."/>
            <person name="Norbertzcak H."/>
            <person name="Harris B."/>
            <person name="Ormond D."/>
            <person name="Rance R."/>
            <person name="Quail M.A."/>
            <person name="Parkhill J."/>
            <person name="Stephens R.S."/>
            <person name="Clarke I.N."/>
        </authorList>
    </citation>
    <scope>NUCLEOTIDE SEQUENCE [LARGE SCALE GENOMIC DNA]</scope>
    <source>
        <strain>ATCC VR-902B / DSM 19102 / 434/Bu</strain>
    </source>
</reference>
<sequence length="300" mass="33072">MPSSFVSQLSPSLFSILREQLEKKGFTISIPPHTVFQGRSPTVSCTVYQSGKIVVQGKGTQEFVEFFLEPEILQTFSSQNVQQDLRSRIGVDESGKGDFFGPLCTAGVYASSPQAIEALYKTSICDSKLIPDAKILSLAQNIRSLCACKVITLFPEKYNALYANFQNLNSLLAWTHATIIDNLAPHPAGAVFAISDQFASSERVLLQAVRKKRSDIELIQRHRAEQDVVVAAASILAREAFLSSIHALESQYQIRLLKGASGKVKQRAKEILHNKGQVVLEKVCKTHFKTFNEVLGSGNQ</sequence>
<feature type="chain" id="PRO_1000091674" description="Ribonuclease HIII">
    <location>
        <begin position="1"/>
        <end position="300"/>
    </location>
</feature>
<feature type="domain" description="RNase H type-2" evidence="2">
    <location>
        <begin position="86"/>
        <end position="300"/>
    </location>
</feature>
<feature type="binding site" evidence="1">
    <location>
        <position position="92"/>
    </location>
    <ligand>
        <name>a divalent metal cation</name>
        <dbReference type="ChEBI" id="CHEBI:60240"/>
    </ligand>
</feature>
<feature type="binding site" evidence="1">
    <location>
        <position position="93"/>
    </location>
    <ligand>
        <name>a divalent metal cation</name>
        <dbReference type="ChEBI" id="CHEBI:60240"/>
    </ligand>
</feature>
<feature type="binding site" evidence="1">
    <location>
        <position position="196"/>
    </location>
    <ligand>
        <name>a divalent metal cation</name>
        <dbReference type="ChEBI" id="CHEBI:60240"/>
    </ligand>
</feature>
<proteinExistence type="inferred from homology"/>